<name>RL6_DESHY</name>
<organism>
    <name type="scientific">Desulfitobacterium hafniense (strain Y51)</name>
    <dbReference type="NCBI Taxonomy" id="138119"/>
    <lineage>
        <taxon>Bacteria</taxon>
        <taxon>Bacillati</taxon>
        <taxon>Bacillota</taxon>
        <taxon>Clostridia</taxon>
        <taxon>Eubacteriales</taxon>
        <taxon>Desulfitobacteriaceae</taxon>
        <taxon>Desulfitobacterium</taxon>
    </lineage>
</organism>
<dbReference type="EMBL" id="AP008230">
    <property type="protein sequence ID" value="BAE82275.1"/>
    <property type="molecule type" value="Genomic_DNA"/>
</dbReference>
<dbReference type="RefSeq" id="WP_005810135.1">
    <property type="nucleotide sequence ID" value="NC_007907.1"/>
</dbReference>
<dbReference type="SMR" id="Q250L7"/>
<dbReference type="STRING" id="138119.DSY0486"/>
<dbReference type="KEGG" id="dsy:DSY0486"/>
<dbReference type="eggNOG" id="COG0097">
    <property type="taxonomic scope" value="Bacteria"/>
</dbReference>
<dbReference type="HOGENOM" id="CLU_065464_1_2_9"/>
<dbReference type="Proteomes" id="UP000001946">
    <property type="component" value="Chromosome"/>
</dbReference>
<dbReference type="GO" id="GO:0022625">
    <property type="term" value="C:cytosolic large ribosomal subunit"/>
    <property type="evidence" value="ECO:0007669"/>
    <property type="project" value="TreeGrafter"/>
</dbReference>
<dbReference type="GO" id="GO:0019843">
    <property type="term" value="F:rRNA binding"/>
    <property type="evidence" value="ECO:0007669"/>
    <property type="project" value="UniProtKB-UniRule"/>
</dbReference>
<dbReference type="GO" id="GO:0003735">
    <property type="term" value="F:structural constituent of ribosome"/>
    <property type="evidence" value="ECO:0007669"/>
    <property type="project" value="InterPro"/>
</dbReference>
<dbReference type="GO" id="GO:0002181">
    <property type="term" value="P:cytoplasmic translation"/>
    <property type="evidence" value="ECO:0007669"/>
    <property type="project" value="TreeGrafter"/>
</dbReference>
<dbReference type="FunFam" id="3.90.930.12:FF:000001">
    <property type="entry name" value="50S ribosomal protein L6"/>
    <property type="match status" value="1"/>
</dbReference>
<dbReference type="FunFam" id="3.90.930.12:FF:000002">
    <property type="entry name" value="50S ribosomal protein L6"/>
    <property type="match status" value="1"/>
</dbReference>
<dbReference type="Gene3D" id="3.90.930.12">
    <property type="entry name" value="Ribosomal protein L6, alpha-beta domain"/>
    <property type="match status" value="2"/>
</dbReference>
<dbReference type="HAMAP" id="MF_01365_B">
    <property type="entry name" value="Ribosomal_uL6_B"/>
    <property type="match status" value="1"/>
</dbReference>
<dbReference type="InterPro" id="IPR000702">
    <property type="entry name" value="Ribosomal_uL6-like"/>
</dbReference>
<dbReference type="InterPro" id="IPR036789">
    <property type="entry name" value="Ribosomal_uL6-like_a/b-dom_sf"/>
</dbReference>
<dbReference type="InterPro" id="IPR020040">
    <property type="entry name" value="Ribosomal_uL6_a/b-dom"/>
</dbReference>
<dbReference type="InterPro" id="IPR019906">
    <property type="entry name" value="Ribosomal_uL6_bac-type"/>
</dbReference>
<dbReference type="InterPro" id="IPR002358">
    <property type="entry name" value="Ribosomal_uL6_CS"/>
</dbReference>
<dbReference type="NCBIfam" id="TIGR03654">
    <property type="entry name" value="L6_bact"/>
    <property type="match status" value="1"/>
</dbReference>
<dbReference type="PANTHER" id="PTHR11655">
    <property type="entry name" value="60S/50S RIBOSOMAL PROTEIN L6/L9"/>
    <property type="match status" value="1"/>
</dbReference>
<dbReference type="PANTHER" id="PTHR11655:SF14">
    <property type="entry name" value="LARGE RIBOSOMAL SUBUNIT PROTEIN UL6M"/>
    <property type="match status" value="1"/>
</dbReference>
<dbReference type="Pfam" id="PF00347">
    <property type="entry name" value="Ribosomal_L6"/>
    <property type="match status" value="2"/>
</dbReference>
<dbReference type="PIRSF" id="PIRSF002162">
    <property type="entry name" value="Ribosomal_L6"/>
    <property type="match status" value="1"/>
</dbReference>
<dbReference type="PRINTS" id="PR00059">
    <property type="entry name" value="RIBOSOMALL6"/>
</dbReference>
<dbReference type="SUPFAM" id="SSF56053">
    <property type="entry name" value="Ribosomal protein L6"/>
    <property type="match status" value="2"/>
</dbReference>
<dbReference type="PROSITE" id="PS00525">
    <property type="entry name" value="RIBOSOMAL_L6_1"/>
    <property type="match status" value="1"/>
</dbReference>
<keyword id="KW-1185">Reference proteome</keyword>
<keyword id="KW-0687">Ribonucleoprotein</keyword>
<keyword id="KW-0689">Ribosomal protein</keyword>
<keyword id="KW-0694">RNA-binding</keyword>
<keyword id="KW-0699">rRNA-binding</keyword>
<proteinExistence type="inferred from homology"/>
<evidence type="ECO:0000255" key="1">
    <source>
        <dbReference type="HAMAP-Rule" id="MF_01365"/>
    </source>
</evidence>
<evidence type="ECO:0000305" key="2"/>
<reference key="1">
    <citation type="journal article" date="2006" name="J. Bacteriol.">
        <title>Complete genome sequence of the dehalorespiring bacterium Desulfitobacterium hafniense Y51 and comparison with Dehalococcoides ethenogenes 195.</title>
        <authorList>
            <person name="Nonaka H."/>
            <person name="Keresztes G."/>
            <person name="Shinoda Y."/>
            <person name="Ikenaga Y."/>
            <person name="Abe M."/>
            <person name="Naito K."/>
            <person name="Inatomi K."/>
            <person name="Furukawa K."/>
            <person name="Inui M."/>
            <person name="Yukawa H."/>
        </authorList>
    </citation>
    <scope>NUCLEOTIDE SEQUENCE [LARGE SCALE GENOMIC DNA]</scope>
    <source>
        <strain>Y51</strain>
    </source>
</reference>
<sequence>MSRIGKRPISIPGGVDVNIEGNVVTVKGPKGTLTKEMHSLINIAVEEQQIVVTRPDDQPLSRSLHGLTRTLVANMVEGVTKGFSKSLDMVGVGYRAAKQGNKLVLSVGKSHPVELIPFEGIEVEVPAQNKIIVKGMDKELVGDFAAEIRKERPPEPYKGKGIKYENEVVRRKAGKTGAKKGGKK</sequence>
<gene>
    <name evidence="1" type="primary">rplF</name>
    <name type="ordered locus">DSY0486</name>
</gene>
<feature type="chain" id="PRO_0000260864" description="Large ribosomal subunit protein uL6">
    <location>
        <begin position="1"/>
        <end position="184"/>
    </location>
</feature>
<protein>
    <recommendedName>
        <fullName evidence="1">Large ribosomal subunit protein uL6</fullName>
    </recommendedName>
    <alternativeName>
        <fullName evidence="2">50S ribosomal protein L6</fullName>
    </alternativeName>
</protein>
<accession>Q250L7</accession>
<comment type="function">
    <text evidence="1">This protein binds to the 23S rRNA, and is important in its secondary structure. It is located near the subunit interface in the base of the L7/L12 stalk, and near the tRNA binding site of the peptidyltransferase center.</text>
</comment>
<comment type="subunit">
    <text evidence="1">Part of the 50S ribosomal subunit.</text>
</comment>
<comment type="similarity">
    <text evidence="1">Belongs to the universal ribosomal protein uL6 family.</text>
</comment>